<sequence>MLHTLSSSPYHADLDTLLRSVDEGDALVLLQDGVIAALAGGDIIHRLLASAVFLYVLRPDTEARGMTEQISNNVALIDYNEFVQLTVEHPQQLAW</sequence>
<organism>
    <name type="scientific">Pectobacterium parmentieri</name>
    <dbReference type="NCBI Taxonomy" id="1905730"/>
    <lineage>
        <taxon>Bacteria</taxon>
        <taxon>Pseudomonadati</taxon>
        <taxon>Pseudomonadota</taxon>
        <taxon>Gammaproteobacteria</taxon>
        <taxon>Enterobacterales</taxon>
        <taxon>Pectobacteriaceae</taxon>
        <taxon>Pectobacterium</taxon>
    </lineage>
</organism>
<dbReference type="EMBL" id="AY730616">
    <property type="protein sequence ID" value="AAU44790.1"/>
    <property type="molecule type" value="Genomic_DNA"/>
</dbReference>
<dbReference type="EMBL" id="CP003415">
    <property type="protein sequence ID" value="AFI92224.1"/>
    <property type="molecule type" value="Genomic_DNA"/>
</dbReference>
<dbReference type="RefSeq" id="WP_014701623.1">
    <property type="nucleotide sequence ID" value="NZ_WABT01000003.1"/>
</dbReference>
<dbReference type="SMR" id="Q5XWD9"/>
<dbReference type="STRING" id="1905730.W5S_4168"/>
<dbReference type="KEGG" id="pec:W5S_4168"/>
<dbReference type="eggNOG" id="COG2168">
    <property type="taxonomic scope" value="Bacteria"/>
</dbReference>
<dbReference type="HOGENOM" id="CLU_166087_2_1_6"/>
<dbReference type="OMA" id="MLHTINK"/>
<dbReference type="Proteomes" id="UP000008044">
    <property type="component" value="Chromosome"/>
</dbReference>
<dbReference type="GO" id="GO:1990228">
    <property type="term" value="C:sulfurtransferase complex"/>
    <property type="evidence" value="ECO:0007669"/>
    <property type="project" value="TreeGrafter"/>
</dbReference>
<dbReference type="GO" id="GO:0002143">
    <property type="term" value="P:tRNA wobble position uridine thiolation"/>
    <property type="evidence" value="ECO:0007669"/>
    <property type="project" value="InterPro"/>
</dbReference>
<dbReference type="Gene3D" id="3.40.1260.10">
    <property type="entry name" value="DsrEFH-like"/>
    <property type="match status" value="1"/>
</dbReference>
<dbReference type="HAMAP" id="MF_01564">
    <property type="entry name" value="Thiourid_synth_B"/>
    <property type="match status" value="1"/>
</dbReference>
<dbReference type="InterPro" id="IPR027396">
    <property type="entry name" value="DsrEFH-like"/>
</dbReference>
<dbReference type="InterPro" id="IPR023526">
    <property type="entry name" value="Sulphur_relay_TusB"/>
</dbReference>
<dbReference type="InterPro" id="IPR007215">
    <property type="entry name" value="Sulphur_relay_TusB/DsrH"/>
</dbReference>
<dbReference type="NCBIfam" id="NF010035">
    <property type="entry name" value="PRK13510.1"/>
    <property type="match status" value="1"/>
</dbReference>
<dbReference type="NCBIfam" id="TIGR03011">
    <property type="entry name" value="sulf_tusB_dsrH"/>
    <property type="match status" value="1"/>
</dbReference>
<dbReference type="PANTHER" id="PTHR37526">
    <property type="entry name" value="PROTEIN TUSB"/>
    <property type="match status" value="1"/>
</dbReference>
<dbReference type="PANTHER" id="PTHR37526:SF1">
    <property type="entry name" value="PROTEIN TUSB"/>
    <property type="match status" value="1"/>
</dbReference>
<dbReference type="Pfam" id="PF04077">
    <property type="entry name" value="DsrH"/>
    <property type="match status" value="1"/>
</dbReference>
<dbReference type="SUPFAM" id="SSF75169">
    <property type="entry name" value="DsrEFH-like"/>
    <property type="match status" value="1"/>
</dbReference>
<evidence type="ECO:0000255" key="1">
    <source>
        <dbReference type="HAMAP-Rule" id="MF_01564"/>
    </source>
</evidence>
<feature type="chain" id="PRO_0000234514" description="Protein TusB">
    <location>
        <begin position="1"/>
        <end position="95"/>
    </location>
</feature>
<protein>
    <recommendedName>
        <fullName evidence="1">Protein TusB</fullName>
    </recommendedName>
    <alternativeName>
        <fullName evidence="1">tRNA 2-thiouridine synthesizing protein B</fullName>
    </alternativeName>
</protein>
<name>TUSB_PECPM</name>
<keyword id="KW-0963">Cytoplasm</keyword>
<keyword id="KW-0819">tRNA processing</keyword>
<gene>
    <name evidence="1" type="primary">tusB</name>
    <name type="ordered locus">W5S_4168</name>
</gene>
<comment type="function">
    <text evidence="1">Part of a sulfur-relay system required for 2-thiolation of 5-methylaminomethyl-2-thiouridine (mnm(5)s(2)U) at tRNA wobble positions.</text>
</comment>
<comment type="subunit">
    <text evidence="1">Heterohexamer, formed by a dimer of trimers. The hexameric TusBCD complex contains 2 copies each of TusB, TusC and TusD. The TusBCD complex interacts with TusE.</text>
</comment>
<comment type="subcellular location">
    <subcellularLocation>
        <location evidence="1">Cytoplasm</location>
    </subcellularLocation>
</comment>
<comment type="similarity">
    <text evidence="1">Belongs to the DsrH/TusB family.</text>
</comment>
<accession>Q5XWD9</accession>
<accession>K4FN52</accession>
<proteinExistence type="inferred from homology"/>
<reference key="1">
    <citation type="journal article" date="2005" name="FEMS Microbiol. Lett.">
        <title>Novel mutants of Erwinia carotovora subsp. carotovora defective in the production of plant cell wall degrading enzymes generated by Mu transpososome-mediated insertion mutagenesis.</title>
        <authorList>
            <person name="Laasik E."/>
            <person name="Ojarand M."/>
            <person name="Pajunen M."/>
            <person name="Savilahti H."/>
            <person name="Maee A."/>
        </authorList>
    </citation>
    <scope>NUCLEOTIDE SEQUENCE [GENOMIC DNA]</scope>
    <source>
        <strain>SCC3193</strain>
    </source>
</reference>
<reference key="2">
    <citation type="journal article" date="2012" name="J. Bacteriol.">
        <title>Genome sequence of Pectobacterium sp. strain SCC3193.</title>
        <authorList>
            <person name="Koskinen J.P."/>
            <person name="Laine P."/>
            <person name="Niemi O."/>
            <person name="Nykyri J."/>
            <person name="Harjunpaa H."/>
            <person name="Auvinen P."/>
            <person name="Paulin L."/>
            <person name="Pirhonen M."/>
            <person name="Palva T."/>
            <person name="Holm L."/>
        </authorList>
    </citation>
    <scope>NUCLEOTIDE SEQUENCE [LARGE SCALE GENOMIC DNA]</scope>
    <source>
        <strain>SCC3193</strain>
    </source>
</reference>